<reference key="1">
    <citation type="journal article" date="2004" name="Nature">
        <title>Genome evolution in yeasts.</title>
        <authorList>
            <person name="Dujon B."/>
            <person name="Sherman D."/>
            <person name="Fischer G."/>
            <person name="Durrens P."/>
            <person name="Casaregola S."/>
            <person name="Lafontaine I."/>
            <person name="de Montigny J."/>
            <person name="Marck C."/>
            <person name="Neuveglise C."/>
            <person name="Talla E."/>
            <person name="Goffard N."/>
            <person name="Frangeul L."/>
            <person name="Aigle M."/>
            <person name="Anthouard V."/>
            <person name="Babour A."/>
            <person name="Barbe V."/>
            <person name="Barnay S."/>
            <person name="Blanchin S."/>
            <person name="Beckerich J.-M."/>
            <person name="Beyne E."/>
            <person name="Bleykasten C."/>
            <person name="Boisrame A."/>
            <person name="Boyer J."/>
            <person name="Cattolico L."/>
            <person name="Confanioleri F."/>
            <person name="de Daruvar A."/>
            <person name="Despons L."/>
            <person name="Fabre E."/>
            <person name="Fairhead C."/>
            <person name="Ferry-Dumazet H."/>
            <person name="Groppi A."/>
            <person name="Hantraye F."/>
            <person name="Hennequin C."/>
            <person name="Jauniaux N."/>
            <person name="Joyet P."/>
            <person name="Kachouri R."/>
            <person name="Kerrest A."/>
            <person name="Koszul R."/>
            <person name="Lemaire M."/>
            <person name="Lesur I."/>
            <person name="Ma L."/>
            <person name="Muller H."/>
            <person name="Nicaud J.-M."/>
            <person name="Nikolski M."/>
            <person name="Oztas S."/>
            <person name="Ozier-Kalogeropoulos O."/>
            <person name="Pellenz S."/>
            <person name="Potier S."/>
            <person name="Richard G.-F."/>
            <person name="Straub M.-L."/>
            <person name="Suleau A."/>
            <person name="Swennen D."/>
            <person name="Tekaia F."/>
            <person name="Wesolowski-Louvel M."/>
            <person name="Westhof E."/>
            <person name="Wirth B."/>
            <person name="Zeniou-Meyer M."/>
            <person name="Zivanovic Y."/>
            <person name="Bolotin-Fukuhara M."/>
            <person name="Thierry A."/>
            <person name="Bouchier C."/>
            <person name="Caudron B."/>
            <person name="Scarpelli C."/>
            <person name="Gaillardin C."/>
            <person name="Weissenbach J."/>
            <person name="Wincker P."/>
            <person name="Souciet J.-L."/>
        </authorList>
    </citation>
    <scope>NUCLEOTIDE SEQUENCE [LARGE SCALE GENOMIC DNA]</scope>
    <source>
        <strain>ATCC 2001 / BCRC 20586 / JCM 3761 / NBRC 0622 / NRRL Y-65 / CBS 138</strain>
    </source>
</reference>
<sequence>MNALRAIDFKRDDPNNVSVSVLDQLLLPYTTKYIPIYTIDDGFTVIKKMQVRGAPAIAIVGALSVLMESQLLLSEGFCKTQYYYNLNDWENIRSKIDERLAFLLSSRPTAINLSNALDEIKIVLDSASDLQTFKNNLFDYVCKLIDDDFANNKRMGDNGAEFLLNLLKKENFNEDFAVFTICNTGSLATSGYGTALGVIRSLWNDSKSKTQEGNPNKKVKLTESSPKMVQVFPLETRPYNQGSRLTAYELVHDDIPATLIPDSSIAYKIMTSKIPIKAAFVGADRIVRNGDTANKIGTLQLAIICKQFGIKFFVVAPRTTIDKVTEEGKDIIVEERNANEFKIVTGSAVDMQTNKPILDEKNEPITAKVGIAPENINVWNPAFDITSFEYIDGIVTEVGVFTKNENGNFDLSALH</sequence>
<organism>
    <name type="scientific">Candida glabrata (strain ATCC 2001 / BCRC 20586 / JCM 3761 / NBRC 0622 / NRRL Y-65 / CBS 138)</name>
    <name type="common">Yeast</name>
    <name type="synonym">Nakaseomyces glabratus</name>
    <dbReference type="NCBI Taxonomy" id="284593"/>
    <lineage>
        <taxon>Eukaryota</taxon>
        <taxon>Fungi</taxon>
        <taxon>Dikarya</taxon>
        <taxon>Ascomycota</taxon>
        <taxon>Saccharomycotina</taxon>
        <taxon>Saccharomycetes</taxon>
        <taxon>Saccharomycetales</taxon>
        <taxon>Saccharomycetaceae</taxon>
        <taxon>Nakaseomyces</taxon>
    </lineage>
</organism>
<accession>Q6FVY2</accession>
<keyword id="KW-0028">Amino-acid biosynthesis</keyword>
<keyword id="KW-0963">Cytoplasm</keyword>
<keyword id="KW-0413">Isomerase</keyword>
<keyword id="KW-0486">Methionine biosynthesis</keyword>
<keyword id="KW-0539">Nucleus</keyword>
<keyword id="KW-1185">Reference proteome</keyword>
<proteinExistence type="inferred from homology"/>
<dbReference type="EC" id="5.3.1.23" evidence="1"/>
<dbReference type="EMBL" id="CR380950">
    <property type="protein sequence ID" value="CAG58523.1"/>
    <property type="molecule type" value="Genomic_DNA"/>
</dbReference>
<dbReference type="RefSeq" id="XP_445612.1">
    <property type="nucleotide sequence ID" value="XM_445612.1"/>
</dbReference>
<dbReference type="SMR" id="Q6FVY2"/>
<dbReference type="FunCoup" id="Q6FVY2">
    <property type="interactions" value="768"/>
</dbReference>
<dbReference type="STRING" id="284593.Q6FVY2"/>
<dbReference type="EnsemblFungi" id="CAGL0D04576g-T">
    <property type="protein sequence ID" value="CAGL0D04576g-T-p1"/>
    <property type="gene ID" value="CAGL0D04576g"/>
</dbReference>
<dbReference type="GeneID" id="2887005"/>
<dbReference type="KEGG" id="cgr:2887005"/>
<dbReference type="CGD" id="CAL0128175">
    <property type="gene designation" value="MRI1"/>
</dbReference>
<dbReference type="VEuPathDB" id="FungiDB:B1J91_D04576g"/>
<dbReference type="VEuPathDB" id="FungiDB:CAGL0D04576g"/>
<dbReference type="eggNOG" id="KOG1468">
    <property type="taxonomic scope" value="Eukaryota"/>
</dbReference>
<dbReference type="HOGENOM" id="CLU_016218_1_3_1"/>
<dbReference type="InParanoid" id="Q6FVY2"/>
<dbReference type="OMA" id="CETRPLN"/>
<dbReference type="UniPathway" id="UPA00904">
    <property type="reaction ID" value="UER00874"/>
</dbReference>
<dbReference type="Proteomes" id="UP000002428">
    <property type="component" value="Chromosome D"/>
</dbReference>
<dbReference type="GO" id="GO:0005737">
    <property type="term" value="C:cytoplasm"/>
    <property type="evidence" value="ECO:0007669"/>
    <property type="project" value="UniProtKB-SubCell"/>
</dbReference>
<dbReference type="GO" id="GO:0005634">
    <property type="term" value="C:nucleus"/>
    <property type="evidence" value="ECO:0007669"/>
    <property type="project" value="UniProtKB-SubCell"/>
</dbReference>
<dbReference type="GO" id="GO:0046523">
    <property type="term" value="F:S-methyl-5-thioribose-1-phosphate isomerase activity"/>
    <property type="evidence" value="ECO:0007669"/>
    <property type="project" value="UniProtKB-UniRule"/>
</dbReference>
<dbReference type="GO" id="GO:0019509">
    <property type="term" value="P:L-methionine salvage from methylthioadenosine"/>
    <property type="evidence" value="ECO:0007669"/>
    <property type="project" value="UniProtKB-UniRule"/>
</dbReference>
<dbReference type="FunFam" id="1.20.120.420:FF:000006">
    <property type="entry name" value="Methylthioribose-1-phosphate isomerase"/>
    <property type="match status" value="1"/>
</dbReference>
<dbReference type="FunFam" id="3.40.50.10470:FF:000006">
    <property type="entry name" value="Methylthioribose-1-phosphate isomerase"/>
    <property type="match status" value="1"/>
</dbReference>
<dbReference type="Gene3D" id="1.20.120.420">
    <property type="entry name" value="translation initiation factor eif-2b, domain 1"/>
    <property type="match status" value="1"/>
</dbReference>
<dbReference type="Gene3D" id="3.40.50.10470">
    <property type="entry name" value="Translation initiation factor eif-2b, domain 2"/>
    <property type="match status" value="1"/>
</dbReference>
<dbReference type="HAMAP" id="MF_01678">
    <property type="entry name" value="Salvage_MtnA"/>
    <property type="match status" value="1"/>
</dbReference>
<dbReference type="InterPro" id="IPR000649">
    <property type="entry name" value="IF-2B-related"/>
</dbReference>
<dbReference type="InterPro" id="IPR005251">
    <property type="entry name" value="IF-M1Pi"/>
</dbReference>
<dbReference type="InterPro" id="IPR042529">
    <property type="entry name" value="IF_2B-like_C"/>
</dbReference>
<dbReference type="InterPro" id="IPR011559">
    <property type="entry name" value="Initiation_fac_2B_a/b/d"/>
</dbReference>
<dbReference type="InterPro" id="IPR027363">
    <property type="entry name" value="M1Pi_N"/>
</dbReference>
<dbReference type="InterPro" id="IPR037171">
    <property type="entry name" value="NagB/RpiA_transferase-like"/>
</dbReference>
<dbReference type="NCBIfam" id="TIGR00524">
    <property type="entry name" value="eIF-2B_rel"/>
    <property type="match status" value="1"/>
</dbReference>
<dbReference type="NCBIfam" id="NF004326">
    <property type="entry name" value="PRK05720.1"/>
    <property type="match status" value="1"/>
</dbReference>
<dbReference type="NCBIfam" id="TIGR00512">
    <property type="entry name" value="salvage_mtnA"/>
    <property type="match status" value="1"/>
</dbReference>
<dbReference type="PANTHER" id="PTHR43475">
    <property type="entry name" value="METHYLTHIORIBOSE-1-PHOSPHATE ISOMERASE"/>
    <property type="match status" value="1"/>
</dbReference>
<dbReference type="PANTHER" id="PTHR43475:SF1">
    <property type="entry name" value="METHYLTHIORIBOSE-1-PHOSPHATE ISOMERASE"/>
    <property type="match status" value="1"/>
</dbReference>
<dbReference type="Pfam" id="PF01008">
    <property type="entry name" value="IF-2B"/>
    <property type="match status" value="1"/>
</dbReference>
<dbReference type="SUPFAM" id="SSF100950">
    <property type="entry name" value="NagB/RpiA/CoA transferase-like"/>
    <property type="match status" value="1"/>
</dbReference>
<name>MTNA_CANGA</name>
<gene>
    <name evidence="1" type="primary">MRI1</name>
    <name type="ordered locus">CAGL0D04576g</name>
</gene>
<protein>
    <recommendedName>
        <fullName evidence="1">Methylthioribose-1-phosphate isomerase</fullName>
        <shortName evidence="1">M1Pi</shortName>
        <shortName evidence="1">MTR-1-P isomerase</shortName>
        <ecNumber evidence="1">5.3.1.23</ecNumber>
    </recommendedName>
    <alternativeName>
        <fullName evidence="1">S-methyl-5-thioribose-1-phosphate isomerase</fullName>
    </alternativeName>
    <alternativeName>
        <fullName evidence="1">Translation initiation factor eIF-2B subunit alpha/beta/delta-like protein</fullName>
    </alternativeName>
</protein>
<evidence type="ECO:0000255" key="1">
    <source>
        <dbReference type="HAMAP-Rule" id="MF_03119"/>
    </source>
</evidence>
<comment type="function">
    <text evidence="1">Catalyzes the interconversion of methylthioribose-1-phosphate (MTR-1-P) into methylthioribulose-1-phosphate (MTRu-1-P).</text>
</comment>
<comment type="catalytic activity">
    <reaction evidence="1">
        <text>5-(methylsulfanyl)-alpha-D-ribose 1-phosphate = 5-(methylsulfanyl)-D-ribulose 1-phosphate</text>
        <dbReference type="Rhea" id="RHEA:19989"/>
        <dbReference type="ChEBI" id="CHEBI:58533"/>
        <dbReference type="ChEBI" id="CHEBI:58548"/>
        <dbReference type="EC" id="5.3.1.23"/>
    </reaction>
</comment>
<comment type="pathway">
    <text evidence="1">Amino-acid biosynthesis; L-methionine biosynthesis via salvage pathway; L-methionine from S-methyl-5-thio-alpha-D-ribose 1-phosphate: step 1/6.</text>
</comment>
<comment type="subcellular location">
    <subcellularLocation>
        <location evidence="1">Cytoplasm</location>
    </subcellularLocation>
    <subcellularLocation>
        <location evidence="1">Nucleus</location>
    </subcellularLocation>
</comment>
<comment type="similarity">
    <text evidence="1">Belongs to the eIF-2B alpha/beta/delta subunits family. MtnA subfamily.</text>
</comment>
<feature type="chain" id="PRO_0000402021" description="Methylthioribose-1-phosphate isomerase">
    <location>
        <begin position="1"/>
        <end position="415"/>
    </location>
</feature>
<feature type="active site" description="Proton donor" evidence="1">
    <location>
        <position position="284"/>
    </location>
</feature>
<feature type="site" description="Transition state stabilizer" evidence="1">
    <location>
        <position position="182"/>
    </location>
</feature>